<feature type="peptide" id="PRO_0000452813" description="Morintide mO6" evidence="3">
    <location>
        <begin position="1"/>
        <end position="28"/>
    </location>
</feature>
<feature type="domain" description="Chitin-binding type-1" evidence="2">
    <location>
        <begin position="1"/>
        <end position="28"/>
    </location>
</feature>
<feature type="disulfide bond" evidence="2">
    <location>
        <begin position="4"/>
        <end position="18"/>
    </location>
</feature>
<feature type="disulfide bond" evidence="2">
    <location>
        <begin position="24"/>
        <end position="28"/>
    </location>
</feature>
<feature type="unsure residue" description="L or I" evidence="3">
    <location>
        <position position="3"/>
    </location>
</feature>
<feature type="unsure residue" description="Q or K" evidence="3">
    <location>
        <position position="7"/>
    </location>
</feature>
<feature type="unsure residue" description="Q or K" evidence="3">
    <location>
        <position position="25"/>
    </location>
</feature>
<feature type="non-terminal residue" evidence="4">
    <location>
        <position position="1"/>
    </location>
</feature>
<feature type="non-terminal residue" evidence="4">
    <location>
        <position position="28"/>
    </location>
</feature>
<comment type="function">
    <text evidence="1">Chitin-binding protein which functions in defense against chitin-containing fungal pathogens.</text>
</comment>
<comment type="tissue specificity">
    <text evidence="3">Seeds (at protein level).</text>
</comment>
<comment type="mass spectrometry" mass="4584.0" method="Electrospray" evidence="3"/>
<comment type="biotechnology">
    <text evidence="3">Has potential use as a flocculating agent in water treatment processes.</text>
</comment>
<protein>
    <recommendedName>
        <fullName evidence="5">Morintide mO6</fullName>
    </recommendedName>
    <alternativeName>
        <fullName evidence="4">Morintide hevein-like peptide 2</fullName>
        <shortName evidence="4">Mo-HLP2</shortName>
    </alternativeName>
</protein>
<name>MO6_MOROL</name>
<dbReference type="SMR" id="C0HLV5"/>
<dbReference type="GO" id="GO:0008061">
    <property type="term" value="F:chitin binding"/>
    <property type="evidence" value="ECO:0007669"/>
    <property type="project" value="UniProtKB-KW"/>
</dbReference>
<dbReference type="GO" id="GO:0050832">
    <property type="term" value="P:defense response to fungus"/>
    <property type="evidence" value="ECO:0007669"/>
    <property type="project" value="UniProtKB-KW"/>
</dbReference>
<dbReference type="GO" id="GO:0031640">
    <property type="term" value="P:killing of cells of another organism"/>
    <property type="evidence" value="ECO:0007669"/>
    <property type="project" value="UniProtKB-KW"/>
</dbReference>
<dbReference type="Gene3D" id="3.30.60.10">
    <property type="entry name" value="Endochitinase-like"/>
    <property type="match status" value="1"/>
</dbReference>
<dbReference type="InterPro" id="IPR001002">
    <property type="entry name" value="Chitin-bd_1"/>
</dbReference>
<dbReference type="InterPro" id="IPR036861">
    <property type="entry name" value="Endochitinase-like_sf"/>
</dbReference>
<dbReference type="Pfam" id="PF00187">
    <property type="entry name" value="Chitin_bind_1"/>
    <property type="match status" value="1"/>
</dbReference>
<dbReference type="SMART" id="SM00270">
    <property type="entry name" value="ChtBD1"/>
    <property type="match status" value="1"/>
</dbReference>
<dbReference type="SUPFAM" id="SSF57016">
    <property type="entry name" value="Plant lectins/antimicrobial peptides"/>
    <property type="match status" value="1"/>
</dbReference>
<dbReference type="PROSITE" id="PS50941">
    <property type="entry name" value="CHIT_BIND_I_2"/>
    <property type="match status" value="1"/>
</dbReference>
<reference evidence="5" key="1">
    <citation type="journal article" date="2020" name="J. Proteomics">
        <title>Mo-HLPs: New flocculating agents identified from Moringa oleifera seeds belong to the hevein-like peptide family.</title>
        <authorList>
            <person name="Sousa A.M.P."/>
            <person name="Salles H.O."/>
            <person name="Oliveira H.D."/>
            <person name="Souza B.B.P."/>
            <person name="Cardozo Filho J.L."/>
            <person name="Sifuentes D.N."/>
            <person name="Prates M.V."/>
            <person name="Bloch Junior C."/>
            <person name="Bemquerer M.P."/>
            <person name="Egito A.S.D."/>
        </authorList>
    </citation>
    <scope>PROTEIN SEQUENCE</scope>
    <scope>IDENTIFICATION BY MASS SPECTROMETRY</scope>
    <scope>TISSUE SPECIFICITY</scope>
    <scope>BIOTECHNOLOGY</scope>
    <source>
        <tissue evidence="4">Seed</tissue>
    </source>
</reference>
<evidence type="ECO:0000250" key="1">
    <source>
        <dbReference type="UniProtKB" id="A0A1S6EK91"/>
    </source>
</evidence>
<evidence type="ECO:0000255" key="2">
    <source>
        <dbReference type="PROSITE-ProRule" id="PRU00261"/>
    </source>
</evidence>
<evidence type="ECO:0000269" key="3">
    <source>
    </source>
</evidence>
<evidence type="ECO:0000303" key="4">
    <source>
    </source>
</evidence>
<evidence type="ECO:0000305" key="5"/>
<organism evidence="4">
    <name type="scientific">Moringa oleifera</name>
    <name type="common">Horseradish tree</name>
    <name type="synonym">Moringa pterygosperma</name>
    <dbReference type="NCBI Taxonomy" id="3735"/>
    <lineage>
        <taxon>Eukaryota</taxon>
        <taxon>Viridiplantae</taxon>
        <taxon>Streptophyta</taxon>
        <taxon>Embryophyta</taxon>
        <taxon>Tracheophyta</taxon>
        <taxon>Spermatophyta</taxon>
        <taxon>Magnoliopsida</taxon>
        <taxon>eudicotyledons</taxon>
        <taxon>Gunneridae</taxon>
        <taxon>Pentapetalae</taxon>
        <taxon>rosids</taxon>
        <taxon>malvids</taxon>
        <taxon>Brassicales</taxon>
        <taxon>Moringaceae</taxon>
        <taxon>Moringa</taxon>
    </lineage>
</organism>
<keyword id="KW-0929">Antimicrobial</keyword>
<keyword id="KW-0147">Chitin-binding</keyword>
<keyword id="KW-0903">Direct protein sequencing</keyword>
<keyword id="KW-1015">Disulfide bond</keyword>
<keyword id="KW-0295">Fungicide</keyword>
<sequence length="28" mass="2899">NGLCCSQYGFCGTTSAYCSRANGCQSNC</sequence>
<proteinExistence type="evidence at protein level"/>
<accession>C0HLV5</accession>